<keyword id="KW-0067">ATP-binding</keyword>
<keyword id="KW-0436">Ligase</keyword>
<keyword id="KW-0547">Nucleotide-binding</keyword>
<keyword id="KW-0658">Purine biosynthesis</keyword>
<name>PUR7_PROM1</name>
<organism>
    <name type="scientific">Prochlorococcus marinus (strain NATL1A)</name>
    <dbReference type="NCBI Taxonomy" id="167555"/>
    <lineage>
        <taxon>Bacteria</taxon>
        <taxon>Bacillati</taxon>
        <taxon>Cyanobacteriota</taxon>
        <taxon>Cyanophyceae</taxon>
        <taxon>Synechococcales</taxon>
        <taxon>Prochlorococcaceae</taxon>
        <taxon>Prochlorococcus</taxon>
    </lineage>
</organism>
<accession>A2C4B2</accession>
<gene>
    <name evidence="1" type="primary">purC</name>
    <name type="ordered locus">NATL1_17661</name>
</gene>
<feature type="chain" id="PRO_1000018751" description="Phosphoribosylaminoimidazole-succinocarboxamide synthase">
    <location>
        <begin position="1"/>
        <end position="247"/>
    </location>
</feature>
<comment type="catalytic activity">
    <reaction evidence="1">
        <text>5-amino-1-(5-phospho-D-ribosyl)imidazole-4-carboxylate + L-aspartate + ATP = (2S)-2-[5-amino-1-(5-phospho-beta-D-ribosyl)imidazole-4-carboxamido]succinate + ADP + phosphate + 2 H(+)</text>
        <dbReference type="Rhea" id="RHEA:22628"/>
        <dbReference type="ChEBI" id="CHEBI:15378"/>
        <dbReference type="ChEBI" id="CHEBI:29991"/>
        <dbReference type="ChEBI" id="CHEBI:30616"/>
        <dbReference type="ChEBI" id="CHEBI:43474"/>
        <dbReference type="ChEBI" id="CHEBI:58443"/>
        <dbReference type="ChEBI" id="CHEBI:77657"/>
        <dbReference type="ChEBI" id="CHEBI:456216"/>
        <dbReference type="EC" id="6.3.2.6"/>
    </reaction>
</comment>
<comment type="pathway">
    <text evidence="1">Purine metabolism; IMP biosynthesis via de novo pathway; 5-amino-1-(5-phospho-D-ribosyl)imidazole-4-carboxamide from 5-amino-1-(5-phospho-D-ribosyl)imidazole-4-carboxylate: step 1/2.</text>
</comment>
<comment type="similarity">
    <text evidence="1">Belongs to the SAICAR synthetase family.</text>
</comment>
<dbReference type="EC" id="6.3.2.6" evidence="1"/>
<dbReference type="EMBL" id="CP000553">
    <property type="protein sequence ID" value="ABM76322.1"/>
    <property type="molecule type" value="Genomic_DNA"/>
</dbReference>
<dbReference type="RefSeq" id="WP_011824317.1">
    <property type="nucleotide sequence ID" value="NC_008819.1"/>
</dbReference>
<dbReference type="SMR" id="A2C4B2"/>
<dbReference type="KEGG" id="pme:NATL1_17661"/>
<dbReference type="eggNOG" id="COG0152">
    <property type="taxonomic scope" value="Bacteria"/>
</dbReference>
<dbReference type="HOGENOM" id="CLU_061495_2_0_3"/>
<dbReference type="UniPathway" id="UPA00074">
    <property type="reaction ID" value="UER00131"/>
</dbReference>
<dbReference type="Proteomes" id="UP000002592">
    <property type="component" value="Chromosome"/>
</dbReference>
<dbReference type="GO" id="GO:0005524">
    <property type="term" value="F:ATP binding"/>
    <property type="evidence" value="ECO:0007669"/>
    <property type="project" value="UniProtKB-KW"/>
</dbReference>
<dbReference type="GO" id="GO:0004639">
    <property type="term" value="F:phosphoribosylaminoimidazolesuccinocarboxamide synthase activity"/>
    <property type="evidence" value="ECO:0007669"/>
    <property type="project" value="UniProtKB-UniRule"/>
</dbReference>
<dbReference type="GO" id="GO:0006189">
    <property type="term" value="P:'de novo' IMP biosynthetic process"/>
    <property type="evidence" value="ECO:0007669"/>
    <property type="project" value="UniProtKB-UniRule"/>
</dbReference>
<dbReference type="GO" id="GO:0009236">
    <property type="term" value="P:cobalamin biosynthetic process"/>
    <property type="evidence" value="ECO:0007669"/>
    <property type="project" value="InterPro"/>
</dbReference>
<dbReference type="CDD" id="cd01415">
    <property type="entry name" value="SAICAR_synt_PurC"/>
    <property type="match status" value="1"/>
</dbReference>
<dbReference type="FunFam" id="3.30.470.20:FF:000006">
    <property type="entry name" value="Phosphoribosylaminoimidazole-succinocarboxamide synthase"/>
    <property type="match status" value="1"/>
</dbReference>
<dbReference type="Gene3D" id="3.30.470.20">
    <property type="entry name" value="ATP-grasp fold, B domain"/>
    <property type="match status" value="1"/>
</dbReference>
<dbReference type="Gene3D" id="3.30.200.20">
    <property type="entry name" value="Phosphorylase Kinase, domain 1"/>
    <property type="match status" value="1"/>
</dbReference>
<dbReference type="HAMAP" id="MF_00137">
    <property type="entry name" value="SAICAR_synth"/>
    <property type="match status" value="1"/>
</dbReference>
<dbReference type="InterPro" id="IPR028923">
    <property type="entry name" value="SAICAR_synt/ADE2_N"/>
</dbReference>
<dbReference type="InterPro" id="IPR033934">
    <property type="entry name" value="SAICAR_synt_PurC"/>
</dbReference>
<dbReference type="InterPro" id="IPR001636">
    <property type="entry name" value="SAICAR_synth"/>
</dbReference>
<dbReference type="InterPro" id="IPR050089">
    <property type="entry name" value="SAICAR_synthetase"/>
</dbReference>
<dbReference type="InterPro" id="IPR018236">
    <property type="entry name" value="SAICAR_synthetase_CS"/>
</dbReference>
<dbReference type="NCBIfam" id="TIGR00081">
    <property type="entry name" value="purC"/>
    <property type="match status" value="1"/>
</dbReference>
<dbReference type="PANTHER" id="PTHR43599">
    <property type="entry name" value="MULTIFUNCTIONAL PROTEIN ADE2"/>
    <property type="match status" value="1"/>
</dbReference>
<dbReference type="PANTHER" id="PTHR43599:SF3">
    <property type="entry name" value="SI:DKEY-6E2.2"/>
    <property type="match status" value="1"/>
</dbReference>
<dbReference type="Pfam" id="PF01259">
    <property type="entry name" value="SAICAR_synt"/>
    <property type="match status" value="1"/>
</dbReference>
<dbReference type="SUPFAM" id="SSF56104">
    <property type="entry name" value="SAICAR synthase-like"/>
    <property type="match status" value="1"/>
</dbReference>
<dbReference type="PROSITE" id="PS01057">
    <property type="entry name" value="SAICAR_SYNTHETASE_1"/>
    <property type="match status" value="1"/>
</dbReference>
<dbReference type="PROSITE" id="PS01058">
    <property type="entry name" value="SAICAR_SYNTHETASE_2"/>
    <property type="match status" value="1"/>
</dbReference>
<sequence>MNHIQGSLIYEGKAKRVFACENPNRVLIEFKNDATAFNAKKRSEIDGKGRLNCKISAALFKLLELNGIPTHFLELQSETFMIADKINVIPLEVVIRNIATGSLCRETPINQGTILNPPLLDYYYKDDELGDPILTERRLKLLDLISTSQIEKIETITKTVNKILKEYFDDLDLLLVDFKLEFGFNSLGEIVIADEISPDNCRFWDKTNSDPKGRILDKDRFRQDLGGVIDAYGEILKRIERDSSNSS</sequence>
<proteinExistence type="inferred from homology"/>
<reference key="1">
    <citation type="journal article" date="2007" name="PLoS Genet.">
        <title>Patterns and implications of gene gain and loss in the evolution of Prochlorococcus.</title>
        <authorList>
            <person name="Kettler G.C."/>
            <person name="Martiny A.C."/>
            <person name="Huang K."/>
            <person name="Zucker J."/>
            <person name="Coleman M.L."/>
            <person name="Rodrigue S."/>
            <person name="Chen F."/>
            <person name="Lapidus A."/>
            <person name="Ferriera S."/>
            <person name="Johnson J."/>
            <person name="Steglich C."/>
            <person name="Church G.M."/>
            <person name="Richardson P."/>
            <person name="Chisholm S.W."/>
        </authorList>
    </citation>
    <scope>NUCLEOTIDE SEQUENCE [LARGE SCALE GENOMIC DNA]</scope>
    <source>
        <strain>NATL1A</strain>
    </source>
</reference>
<evidence type="ECO:0000255" key="1">
    <source>
        <dbReference type="HAMAP-Rule" id="MF_00137"/>
    </source>
</evidence>
<protein>
    <recommendedName>
        <fullName evidence="1">Phosphoribosylaminoimidazole-succinocarboxamide synthase</fullName>
        <ecNumber evidence="1">6.3.2.6</ecNumber>
    </recommendedName>
    <alternativeName>
        <fullName evidence="1">SAICAR synthetase</fullName>
    </alternativeName>
</protein>